<proteinExistence type="inferred from homology"/>
<comment type="catalytic activity">
    <reaction evidence="1">
        <text>(6R)-10-formyltetrahydrofolate + 5-amino-1-(5-phospho-beta-D-ribosyl)imidazole-4-carboxamide = 5-formamido-1-(5-phospho-D-ribosyl)imidazole-4-carboxamide + (6S)-5,6,7,8-tetrahydrofolate</text>
        <dbReference type="Rhea" id="RHEA:22192"/>
        <dbReference type="ChEBI" id="CHEBI:57453"/>
        <dbReference type="ChEBI" id="CHEBI:58467"/>
        <dbReference type="ChEBI" id="CHEBI:58475"/>
        <dbReference type="ChEBI" id="CHEBI:195366"/>
        <dbReference type="EC" id="2.1.2.3"/>
    </reaction>
</comment>
<comment type="catalytic activity">
    <reaction evidence="1">
        <text>IMP + H2O = 5-formamido-1-(5-phospho-D-ribosyl)imidazole-4-carboxamide</text>
        <dbReference type="Rhea" id="RHEA:18445"/>
        <dbReference type="ChEBI" id="CHEBI:15377"/>
        <dbReference type="ChEBI" id="CHEBI:58053"/>
        <dbReference type="ChEBI" id="CHEBI:58467"/>
        <dbReference type="EC" id="3.5.4.10"/>
    </reaction>
</comment>
<comment type="pathway">
    <text evidence="1">Purine metabolism; IMP biosynthesis via de novo pathway; 5-formamido-1-(5-phospho-D-ribosyl)imidazole-4-carboxamide from 5-amino-1-(5-phospho-D-ribosyl)imidazole-4-carboxamide (10-formyl THF route): step 1/1.</text>
</comment>
<comment type="pathway">
    <text evidence="1">Purine metabolism; IMP biosynthesis via de novo pathway; IMP from 5-formamido-1-(5-phospho-D-ribosyl)imidazole-4-carboxamide: step 1/1.</text>
</comment>
<comment type="domain">
    <text evidence="1">The IMP cyclohydrolase activity resides in the N-terminal region.</text>
</comment>
<comment type="similarity">
    <text evidence="1">Belongs to the PurH family.</text>
</comment>
<protein>
    <recommendedName>
        <fullName evidence="1">Bifunctional purine biosynthesis protein PurH</fullName>
    </recommendedName>
    <domain>
        <recommendedName>
            <fullName evidence="1">Phosphoribosylaminoimidazolecarboxamide formyltransferase</fullName>
            <ecNumber evidence="1">2.1.2.3</ecNumber>
        </recommendedName>
        <alternativeName>
            <fullName evidence="1">AICAR transformylase</fullName>
        </alternativeName>
    </domain>
    <domain>
        <recommendedName>
            <fullName evidence="1">IMP cyclohydrolase</fullName>
            <ecNumber evidence="1">3.5.4.10</ecNumber>
        </recommendedName>
        <alternativeName>
            <fullName evidence="1">ATIC</fullName>
        </alternativeName>
        <alternativeName>
            <fullName evidence="1">IMP synthase</fullName>
        </alternativeName>
        <alternativeName>
            <fullName evidence="1">Inosinicase</fullName>
        </alternativeName>
    </domain>
</protein>
<dbReference type="EC" id="2.1.2.3" evidence="1"/>
<dbReference type="EC" id="3.5.4.10" evidence="1"/>
<dbReference type="EMBL" id="AM040264">
    <property type="protein sequence ID" value="CAJ11780.1"/>
    <property type="molecule type" value="Genomic_DNA"/>
</dbReference>
<dbReference type="RefSeq" id="WP_002964894.1">
    <property type="nucleotide sequence ID" value="NZ_KN046823.1"/>
</dbReference>
<dbReference type="SMR" id="Q2YLH0"/>
<dbReference type="STRING" id="359391.BAB1_1824"/>
<dbReference type="GeneID" id="93017844"/>
<dbReference type="KEGG" id="bmf:BAB1_1824"/>
<dbReference type="PATRIC" id="fig|359391.11.peg.337"/>
<dbReference type="HOGENOM" id="CLU_016316_5_2_5"/>
<dbReference type="PhylomeDB" id="Q2YLH0"/>
<dbReference type="UniPathway" id="UPA00074">
    <property type="reaction ID" value="UER00133"/>
</dbReference>
<dbReference type="UniPathway" id="UPA00074">
    <property type="reaction ID" value="UER00135"/>
</dbReference>
<dbReference type="PRO" id="PR:Q2YLH0"/>
<dbReference type="Proteomes" id="UP000002719">
    <property type="component" value="Chromosome I"/>
</dbReference>
<dbReference type="GO" id="GO:0005829">
    <property type="term" value="C:cytosol"/>
    <property type="evidence" value="ECO:0007669"/>
    <property type="project" value="TreeGrafter"/>
</dbReference>
<dbReference type="GO" id="GO:0003937">
    <property type="term" value="F:IMP cyclohydrolase activity"/>
    <property type="evidence" value="ECO:0007669"/>
    <property type="project" value="UniProtKB-UniRule"/>
</dbReference>
<dbReference type="GO" id="GO:0004643">
    <property type="term" value="F:phosphoribosylaminoimidazolecarboxamide formyltransferase activity"/>
    <property type="evidence" value="ECO:0007669"/>
    <property type="project" value="UniProtKB-UniRule"/>
</dbReference>
<dbReference type="GO" id="GO:0006189">
    <property type="term" value="P:'de novo' IMP biosynthetic process"/>
    <property type="evidence" value="ECO:0007669"/>
    <property type="project" value="UniProtKB-UniRule"/>
</dbReference>
<dbReference type="CDD" id="cd01421">
    <property type="entry name" value="IMPCH"/>
    <property type="match status" value="1"/>
</dbReference>
<dbReference type="FunFam" id="3.40.140.20:FF:000001">
    <property type="entry name" value="Bifunctional purine biosynthesis protein PurH"/>
    <property type="match status" value="1"/>
</dbReference>
<dbReference type="FunFam" id="3.40.140.20:FF:000002">
    <property type="entry name" value="Bifunctional purine biosynthesis protein PurH"/>
    <property type="match status" value="1"/>
</dbReference>
<dbReference type="FunFam" id="3.40.50.1380:FF:000001">
    <property type="entry name" value="Bifunctional purine biosynthesis protein PurH"/>
    <property type="match status" value="1"/>
</dbReference>
<dbReference type="Gene3D" id="3.40.140.20">
    <property type="match status" value="2"/>
</dbReference>
<dbReference type="Gene3D" id="3.40.50.1380">
    <property type="entry name" value="Methylglyoxal synthase-like domain"/>
    <property type="match status" value="1"/>
</dbReference>
<dbReference type="HAMAP" id="MF_00139">
    <property type="entry name" value="PurH"/>
    <property type="match status" value="1"/>
</dbReference>
<dbReference type="InterPro" id="IPR024051">
    <property type="entry name" value="AICAR_Tfase_dup_dom_sf"/>
</dbReference>
<dbReference type="InterPro" id="IPR016193">
    <property type="entry name" value="Cytidine_deaminase-like"/>
</dbReference>
<dbReference type="InterPro" id="IPR011607">
    <property type="entry name" value="MGS-like_dom"/>
</dbReference>
<dbReference type="InterPro" id="IPR036914">
    <property type="entry name" value="MGS-like_dom_sf"/>
</dbReference>
<dbReference type="InterPro" id="IPR002695">
    <property type="entry name" value="PurH-like"/>
</dbReference>
<dbReference type="NCBIfam" id="NF002049">
    <property type="entry name" value="PRK00881.1"/>
    <property type="match status" value="1"/>
</dbReference>
<dbReference type="NCBIfam" id="TIGR00355">
    <property type="entry name" value="purH"/>
    <property type="match status" value="1"/>
</dbReference>
<dbReference type="PANTHER" id="PTHR11692:SF0">
    <property type="entry name" value="BIFUNCTIONAL PURINE BIOSYNTHESIS PROTEIN ATIC"/>
    <property type="match status" value="1"/>
</dbReference>
<dbReference type="PANTHER" id="PTHR11692">
    <property type="entry name" value="BIFUNCTIONAL PURINE BIOSYNTHESIS PROTEIN PURH"/>
    <property type="match status" value="1"/>
</dbReference>
<dbReference type="Pfam" id="PF01808">
    <property type="entry name" value="AICARFT_IMPCHas"/>
    <property type="match status" value="1"/>
</dbReference>
<dbReference type="Pfam" id="PF02142">
    <property type="entry name" value="MGS"/>
    <property type="match status" value="1"/>
</dbReference>
<dbReference type="PIRSF" id="PIRSF000414">
    <property type="entry name" value="AICARFT_IMPCHas"/>
    <property type="match status" value="1"/>
</dbReference>
<dbReference type="SMART" id="SM00798">
    <property type="entry name" value="AICARFT_IMPCHas"/>
    <property type="match status" value="1"/>
</dbReference>
<dbReference type="SMART" id="SM00851">
    <property type="entry name" value="MGS"/>
    <property type="match status" value="1"/>
</dbReference>
<dbReference type="SUPFAM" id="SSF53927">
    <property type="entry name" value="Cytidine deaminase-like"/>
    <property type="match status" value="1"/>
</dbReference>
<dbReference type="SUPFAM" id="SSF52335">
    <property type="entry name" value="Methylglyoxal synthase-like"/>
    <property type="match status" value="1"/>
</dbReference>
<dbReference type="PROSITE" id="PS51855">
    <property type="entry name" value="MGS"/>
    <property type="match status" value="1"/>
</dbReference>
<accession>Q2YLH0</accession>
<gene>
    <name evidence="1" type="primary">purH</name>
    <name type="ordered locus">BAB1_1824</name>
</gene>
<feature type="chain" id="PRO_1000018848" description="Bifunctional purine biosynthesis protein PurH">
    <location>
        <begin position="1"/>
        <end position="538"/>
    </location>
</feature>
<feature type="domain" description="MGS-like" evidence="2">
    <location>
        <begin position="6"/>
        <end position="158"/>
    </location>
</feature>
<sequence>MAVSSKHIPAPDLHRVRRALLSVSDKTGLIDFAKALHANGVEILSTGGTAKSIAAAGIPVKDVSEITGFPEIMDGRVKTLHPAVHGGLLAVRNDPEHVAAMEEHGIGGIDLAVINLYPFEEVRFKGGDYDTTVENIDIGGPAMIRASAKNHAYVATVVDPADYADVVAELEKHSGSLPLAFRKKLAAKAFSRTAAYDAAISNWFAEAIDEETPTYRAAAGKLHSVMRYGENPHQTAGFYLTGEKRPGVATATQLQGKQLSYNNINDTDAAFELVAEFDPARTAAVAIIKHANPCGVAEASTIKEAYLKALACDPVSAFGGIVALNRTLDEEAAEEIVKTFTEVIIAPDATEGAQAIVAAKKNLRLLVTGGLPDPRAKGIAAKTVAGGLLVQSRDNGVVDDLDLKVVTKRAPTEAELNDLKFAFRVGKHVKSNAIVYVKDGATVGIGAGQMSRVDSARIAARKAEDAAEAAGLAAPLTKGCVVASDAFFPFADGLLSAVEAGATAVIQPGGSMRDDEVIAAADEHGIAMVMTGMRHFRH</sequence>
<name>PUR9_BRUA2</name>
<organism>
    <name type="scientific">Brucella abortus (strain 2308)</name>
    <dbReference type="NCBI Taxonomy" id="359391"/>
    <lineage>
        <taxon>Bacteria</taxon>
        <taxon>Pseudomonadati</taxon>
        <taxon>Pseudomonadota</taxon>
        <taxon>Alphaproteobacteria</taxon>
        <taxon>Hyphomicrobiales</taxon>
        <taxon>Brucellaceae</taxon>
        <taxon>Brucella/Ochrobactrum group</taxon>
        <taxon>Brucella</taxon>
    </lineage>
</organism>
<reference key="1">
    <citation type="journal article" date="2005" name="Infect. Immun.">
        <title>Whole-genome analyses of speciation events in pathogenic Brucellae.</title>
        <authorList>
            <person name="Chain P.S."/>
            <person name="Comerci D.J."/>
            <person name="Tolmasky M.E."/>
            <person name="Larimer F.W."/>
            <person name="Malfatti S.A."/>
            <person name="Vergez L.M."/>
            <person name="Aguero F."/>
            <person name="Land M.L."/>
            <person name="Ugalde R.A."/>
            <person name="Garcia E."/>
        </authorList>
    </citation>
    <scope>NUCLEOTIDE SEQUENCE [LARGE SCALE GENOMIC DNA]</scope>
    <source>
        <strain>2308</strain>
    </source>
</reference>
<evidence type="ECO:0000255" key="1">
    <source>
        <dbReference type="HAMAP-Rule" id="MF_00139"/>
    </source>
</evidence>
<evidence type="ECO:0000255" key="2">
    <source>
        <dbReference type="PROSITE-ProRule" id="PRU01202"/>
    </source>
</evidence>
<keyword id="KW-0378">Hydrolase</keyword>
<keyword id="KW-0511">Multifunctional enzyme</keyword>
<keyword id="KW-0658">Purine biosynthesis</keyword>
<keyword id="KW-1185">Reference proteome</keyword>
<keyword id="KW-0808">Transferase</keyword>